<reference key="1">
    <citation type="journal article" date="1999" name="Nature">
        <title>Genomic sequence comparison of two unrelated isolates of the human gastric pathogen Helicobacter pylori.</title>
        <authorList>
            <person name="Alm R.A."/>
            <person name="Ling L.-S.L."/>
            <person name="Moir D.T."/>
            <person name="King B.L."/>
            <person name="Brown E.D."/>
            <person name="Doig P.C."/>
            <person name="Smith D.R."/>
            <person name="Noonan B."/>
            <person name="Guild B.C."/>
            <person name="deJonge B.L."/>
            <person name="Carmel G."/>
            <person name="Tummino P.J."/>
            <person name="Caruso A."/>
            <person name="Uria-Nickelsen M."/>
            <person name="Mills D.M."/>
            <person name="Ives C."/>
            <person name="Gibson R."/>
            <person name="Merberg D."/>
            <person name="Mills S.D."/>
            <person name="Jiang Q."/>
            <person name="Taylor D.E."/>
            <person name="Vovis G.F."/>
            <person name="Trust T.J."/>
        </authorList>
    </citation>
    <scope>NUCLEOTIDE SEQUENCE [LARGE SCALE GENOMIC DNA]</scope>
    <source>
        <strain>J99 / ATCC 700824</strain>
    </source>
</reference>
<feature type="chain" id="PRO_0000172950" description="Dephospho-CoA kinase">
    <location>
        <begin position="1"/>
        <end position="196"/>
    </location>
</feature>
<feature type="domain" description="DPCK" evidence="1">
    <location>
        <begin position="6"/>
        <end position="196"/>
    </location>
</feature>
<feature type="binding site" evidence="1">
    <location>
        <begin position="14"/>
        <end position="19"/>
    </location>
    <ligand>
        <name>ATP</name>
        <dbReference type="ChEBI" id="CHEBI:30616"/>
    </ligand>
</feature>
<name>COAE_HELPJ</name>
<comment type="function">
    <text evidence="1">Catalyzes the phosphorylation of the 3'-hydroxyl group of dephosphocoenzyme A to form coenzyme A.</text>
</comment>
<comment type="catalytic activity">
    <reaction evidence="1">
        <text>3'-dephospho-CoA + ATP = ADP + CoA + H(+)</text>
        <dbReference type="Rhea" id="RHEA:18245"/>
        <dbReference type="ChEBI" id="CHEBI:15378"/>
        <dbReference type="ChEBI" id="CHEBI:30616"/>
        <dbReference type="ChEBI" id="CHEBI:57287"/>
        <dbReference type="ChEBI" id="CHEBI:57328"/>
        <dbReference type="ChEBI" id="CHEBI:456216"/>
        <dbReference type="EC" id="2.7.1.24"/>
    </reaction>
</comment>
<comment type="pathway">
    <text evidence="1">Cofactor biosynthesis; coenzyme A biosynthesis; CoA from (R)-pantothenate: step 5/5.</text>
</comment>
<comment type="subcellular location">
    <subcellularLocation>
        <location evidence="1">Cytoplasm</location>
    </subcellularLocation>
</comment>
<comment type="similarity">
    <text evidence="1 2">Belongs to the CoaE family.</text>
</comment>
<gene>
    <name evidence="1" type="primary">coaE</name>
    <name type="ordered locus">jhp_0770</name>
</gene>
<accession>Q9ZL12</accession>
<organism>
    <name type="scientific">Helicobacter pylori (strain J99 / ATCC 700824)</name>
    <name type="common">Campylobacter pylori J99</name>
    <dbReference type="NCBI Taxonomy" id="85963"/>
    <lineage>
        <taxon>Bacteria</taxon>
        <taxon>Pseudomonadati</taxon>
        <taxon>Campylobacterota</taxon>
        <taxon>Epsilonproteobacteria</taxon>
        <taxon>Campylobacterales</taxon>
        <taxon>Helicobacteraceae</taxon>
        <taxon>Helicobacter</taxon>
    </lineage>
</organism>
<proteinExistence type="inferred from homology"/>
<dbReference type="EC" id="2.7.1.24" evidence="1"/>
<dbReference type="EMBL" id="AE001439">
    <property type="protein sequence ID" value="AAD06349.1"/>
    <property type="molecule type" value="Genomic_DNA"/>
</dbReference>
<dbReference type="PIR" id="B71891">
    <property type="entry name" value="B71891"/>
</dbReference>
<dbReference type="RefSeq" id="WP_000601319.1">
    <property type="nucleotide sequence ID" value="NC_000921.1"/>
</dbReference>
<dbReference type="SMR" id="Q9ZL12"/>
<dbReference type="KEGG" id="hpj:jhp_0770"/>
<dbReference type="PATRIC" id="fig|85963.30.peg.205"/>
<dbReference type="eggNOG" id="COG0237">
    <property type="taxonomic scope" value="Bacteria"/>
</dbReference>
<dbReference type="UniPathway" id="UPA00241">
    <property type="reaction ID" value="UER00356"/>
</dbReference>
<dbReference type="Proteomes" id="UP000000804">
    <property type="component" value="Chromosome"/>
</dbReference>
<dbReference type="GO" id="GO:0005737">
    <property type="term" value="C:cytoplasm"/>
    <property type="evidence" value="ECO:0007669"/>
    <property type="project" value="UniProtKB-SubCell"/>
</dbReference>
<dbReference type="GO" id="GO:0005524">
    <property type="term" value="F:ATP binding"/>
    <property type="evidence" value="ECO:0007669"/>
    <property type="project" value="UniProtKB-UniRule"/>
</dbReference>
<dbReference type="GO" id="GO:0004140">
    <property type="term" value="F:dephospho-CoA kinase activity"/>
    <property type="evidence" value="ECO:0007669"/>
    <property type="project" value="UniProtKB-UniRule"/>
</dbReference>
<dbReference type="GO" id="GO:0015937">
    <property type="term" value="P:coenzyme A biosynthetic process"/>
    <property type="evidence" value="ECO:0007669"/>
    <property type="project" value="UniProtKB-UniRule"/>
</dbReference>
<dbReference type="CDD" id="cd02022">
    <property type="entry name" value="DPCK"/>
    <property type="match status" value="1"/>
</dbReference>
<dbReference type="Gene3D" id="3.40.50.300">
    <property type="entry name" value="P-loop containing nucleotide triphosphate hydrolases"/>
    <property type="match status" value="1"/>
</dbReference>
<dbReference type="HAMAP" id="MF_00376">
    <property type="entry name" value="Dephospho_CoA_kinase"/>
    <property type="match status" value="1"/>
</dbReference>
<dbReference type="InterPro" id="IPR001977">
    <property type="entry name" value="Depp_CoAkinase"/>
</dbReference>
<dbReference type="InterPro" id="IPR027417">
    <property type="entry name" value="P-loop_NTPase"/>
</dbReference>
<dbReference type="NCBIfam" id="TIGR00152">
    <property type="entry name" value="dephospho-CoA kinase"/>
    <property type="match status" value="1"/>
</dbReference>
<dbReference type="PANTHER" id="PTHR10695:SF46">
    <property type="entry name" value="BIFUNCTIONAL COENZYME A SYNTHASE-RELATED"/>
    <property type="match status" value="1"/>
</dbReference>
<dbReference type="PANTHER" id="PTHR10695">
    <property type="entry name" value="DEPHOSPHO-COA KINASE-RELATED"/>
    <property type="match status" value="1"/>
</dbReference>
<dbReference type="Pfam" id="PF01121">
    <property type="entry name" value="CoaE"/>
    <property type="match status" value="1"/>
</dbReference>
<dbReference type="SUPFAM" id="SSF52540">
    <property type="entry name" value="P-loop containing nucleoside triphosphate hydrolases"/>
    <property type="match status" value="1"/>
</dbReference>
<dbReference type="PROSITE" id="PS51219">
    <property type="entry name" value="DPCK"/>
    <property type="match status" value="1"/>
</dbReference>
<sequence length="196" mass="22650">MILKNAIALTGGIGTGKSTTLKILESQGYKILDADKIAHQLLQEHRLEIAQRFGSDILEKDILNRKKLGAIVFQNANELKWLEDFLHPLIRECMLKKACELEKNHQAYFLDIPLFFEVGGKKRYPVSRVVLIYAPRALQIERLLERDKLKEAEILQRLACQMDIEQKRAMSDYIIDNSSSLKDLNKQVERFLKTLL</sequence>
<protein>
    <recommendedName>
        <fullName evidence="1">Dephospho-CoA kinase</fullName>
        <ecNumber evidence="1">2.7.1.24</ecNumber>
    </recommendedName>
    <alternativeName>
        <fullName evidence="1">Dephosphocoenzyme A kinase</fullName>
    </alternativeName>
</protein>
<evidence type="ECO:0000255" key="1">
    <source>
        <dbReference type="HAMAP-Rule" id="MF_00376"/>
    </source>
</evidence>
<evidence type="ECO:0000305" key="2"/>
<keyword id="KW-0067">ATP-binding</keyword>
<keyword id="KW-0173">Coenzyme A biosynthesis</keyword>
<keyword id="KW-0963">Cytoplasm</keyword>
<keyword id="KW-0418">Kinase</keyword>
<keyword id="KW-0547">Nucleotide-binding</keyword>
<keyword id="KW-0808">Transferase</keyword>